<gene>
    <name evidence="9" type="primary">Dspp</name>
    <name evidence="9" type="synonym">Dmp3</name>
</gene>
<proteinExistence type="evidence at protein level"/>
<feature type="signal peptide" evidence="3">
    <location>
        <begin position="1"/>
        <end position="17"/>
    </location>
</feature>
<feature type="chain" id="PRO_0000021123" description="Dentin sialophosphoprotein">
    <location>
        <begin position="18"/>
        <end position="934"/>
    </location>
</feature>
<feature type="chain" id="PRO_0000021124" description="Dentin sialoprotein">
    <location>
        <begin position="18"/>
        <end position="451"/>
    </location>
</feature>
<feature type="chain" id="PRO_0000021125" description="Dentin phosphoprotein">
    <location>
        <begin position="452"/>
        <end position="934"/>
    </location>
</feature>
<feature type="region of interest" description="Disordered" evidence="4">
    <location>
        <begin position="48"/>
        <end position="98"/>
    </location>
</feature>
<feature type="region of interest" description="Disordered" evidence="4">
    <location>
        <begin position="148"/>
        <end position="934"/>
    </location>
</feature>
<feature type="short sequence motif" description="Cell attachment site" evidence="3">
    <location>
        <begin position="479"/>
        <end position="481"/>
    </location>
</feature>
<feature type="compositionally biased region" description="Low complexity" evidence="4">
    <location>
        <begin position="52"/>
        <end position="67"/>
    </location>
</feature>
<feature type="compositionally biased region" description="Polar residues" evidence="4">
    <location>
        <begin position="153"/>
        <end position="174"/>
    </location>
</feature>
<feature type="compositionally biased region" description="Acidic residues" evidence="4">
    <location>
        <begin position="246"/>
        <end position="261"/>
    </location>
</feature>
<feature type="compositionally biased region" description="Basic and acidic residues" evidence="4">
    <location>
        <begin position="263"/>
        <end position="272"/>
    </location>
</feature>
<feature type="compositionally biased region" description="Acidic residues" evidence="4">
    <location>
        <begin position="314"/>
        <end position="324"/>
    </location>
</feature>
<feature type="compositionally biased region" description="Basic and acidic residues" evidence="4">
    <location>
        <begin position="330"/>
        <end position="344"/>
    </location>
</feature>
<feature type="compositionally biased region" description="Polar residues" evidence="4">
    <location>
        <begin position="348"/>
        <end position="363"/>
    </location>
</feature>
<feature type="compositionally biased region" description="Basic and acidic residues" evidence="4">
    <location>
        <begin position="396"/>
        <end position="411"/>
    </location>
</feature>
<feature type="compositionally biased region" description="Polar residues" evidence="4">
    <location>
        <begin position="421"/>
        <end position="436"/>
    </location>
</feature>
<feature type="compositionally biased region" description="Acidic residues" evidence="4">
    <location>
        <begin position="503"/>
        <end position="530"/>
    </location>
</feature>
<feature type="compositionally biased region" description="Basic and acidic residues" evidence="4">
    <location>
        <begin position="531"/>
        <end position="548"/>
    </location>
</feature>
<feature type="compositionally biased region" description="Low complexity" evidence="4">
    <location>
        <begin position="558"/>
        <end position="884"/>
    </location>
</feature>
<feature type="compositionally biased region" description="Low complexity" evidence="4">
    <location>
        <begin position="902"/>
        <end position="915"/>
    </location>
</feature>
<feature type="compositionally biased region" description="Low complexity" evidence="4">
    <location>
        <begin position="925"/>
        <end position="934"/>
    </location>
</feature>
<feature type="modified residue" description="Phosphoserine; by CK2" evidence="3">
    <location>
        <position position="227"/>
    </location>
</feature>
<feature type="modified residue" description="Phosphoserine; by CK1" evidence="3">
    <location>
        <position position="254"/>
    </location>
</feature>
<feature type="modified residue" description="Phosphoserine; by CK1" evidence="3">
    <location>
        <position position="279"/>
    </location>
</feature>
<feature type="modified residue" description="Phosphoserine; by CK2" evidence="2">
    <location>
        <position position="293"/>
    </location>
</feature>
<feature type="modified residue" description="Phosphoserine; by CK1" evidence="2">
    <location>
        <position position="299"/>
    </location>
</feature>
<feature type="modified residue" description="Phosphoserine; by CK2" evidence="3">
    <location>
        <position position="314"/>
    </location>
</feature>
<feature type="modified residue" description="Phosphoserine; by CK2" evidence="3">
    <location>
        <position position="336"/>
    </location>
</feature>
<feature type="modified residue" description="Phosphoserine; by CK2" evidence="3">
    <location>
        <position position="349"/>
    </location>
</feature>
<feature type="glycosylation site" description="N-linked (GlcNAc...) asparagine" evidence="3">
    <location>
        <position position="54"/>
    </location>
</feature>
<feature type="glycosylation site" description="N-linked (GlcNAc...) asparagine" evidence="3">
    <location>
        <position position="84"/>
    </location>
</feature>
<feature type="glycosylation site" description="N-linked (GlcNAc...) asparagine" evidence="3">
    <location>
        <position position="130"/>
    </location>
</feature>
<feature type="glycosylation site" description="N-linked (GlcNAc...) asparagine" evidence="3">
    <location>
        <position position="190"/>
    </location>
</feature>
<feature type="glycosylation site" description="N-linked (GlcNAc...) asparagine" evidence="3">
    <location>
        <position position="313"/>
    </location>
</feature>
<feature type="glycosylation site" description="N-linked (GlcNAc...) asparagine" evidence="3">
    <location>
        <position position="373"/>
    </location>
</feature>
<name>DSPP_MOUSE</name>
<organism>
    <name type="scientific">Mus musculus</name>
    <name type="common">Mouse</name>
    <dbReference type="NCBI Taxonomy" id="10090"/>
    <lineage>
        <taxon>Eukaryota</taxon>
        <taxon>Metazoa</taxon>
        <taxon>Chordata</taxon>
        <taxon>Craniata</taxon>
        <taxon>Vertebrata</taxon>
        <taxon>Euteleostomi</taxon>
        <taxon>Mammalia</taxon>
        <taxon>Eutheria</taxon>
        <taxon>Euarchontoglires</taxon>
        <taxon>Glires</taxon>
        <taxon>Rodentia</taxon>
        <taxon>Myomorpha</taxon>
        <taxon>Muroidea</taxon>
        <taxon>Muridae</taxon>
        <taxon>Murinae</taxon>
        <taxon>Mus</taxon>
        <taxon>Mus</taxon>
    </lineage>
</organism>
<accession>P97399</accession>
<accession>O70567</accession>
<dbReference type="EMBL" id="U67916">
    <property type="protein sequence ID" value="AAC12787.1"/>
    <property type="molecule type" value="mRNA"/>
</dbReference>
<dbReference type="EMBL" id="AJ002141">
    <property type="protein sequence ID" value="CAA05208.1"/>
    <property type="status" value="ALT_SEQ"/>
    <property type="molecule type" value="Genomic_DNA"/>
</dbReference>
<dbReference type="EMBL" id="AF135799">
    <property type="protein sequence ID" value="AAD42781.1"/>
    <property type="status" value="ALT_SEQ"/>
    <property type="molecule type" value="Genomic_DNA"/>
</dbReference>
<dbReference type="SMR" id="P97399"/>
<dbReference type="FunCoup" id="P97399">
    <property type="interactions" value="24"/>
</dbReference>
<dbReference type="STRING" id="10090.ENSMUSP00000108391"/>
<dbReference type="GlyCosmos" id="P97399">
    <property type="glycosylation" value="6 sites, No reported glycans"/>
</dbReference>
<dbReference type="GlyGen" id="P97399">
    <property type="glycosylation" value="8 sites"/>
</dbReference>
<dbReference type="iPTMnet" id="P97399"/>
<dbReference type="PhosphoSitePlus" id="P97399"/>
<dbReference type="CPTAC" id="non-CPTAC-3974"/>
<dbReference type="jPOST" id="P97399"/>
<dbReference type="PaxDb" id="10090-ENSMUSP00000108391"/>
<dbReference type="PeptideAtlas" id="P97399"/>
<dbReference type="ProteomicsDB" id="277507"/>
<dbReference type="AGR" id="MGI:109172"/>
<dbReference type="MGI" id="MGI:109172">
    <property type="gene designation" value="Dspp"/>
</dbReference>
<dbReference type="eggNOG" id="ENOG502S0YS">
    <property type="taxonomic scope" value="Eukaryota"/>
</dbReference>
<dbReference type="InParanoid" id="P97399"/>
<dbReference type="Reactome" id="R-MMU-3000178">
    <property type="pathway name" value="ECM proteoglycans"/>
</dbReference>
<dbReference type="PRO" id="PR:P97399"/>
<dbReference type="Proteomes" id="UP000000589">
    <property type="component" value="Unplaced"/>
</dbReference>
<dbReference type="RNAct" id="P97399">
    <property type="molecule type" value="protein"/>
</dbReference>
<dbReference type="GO" id="GO:0031012">
    <property type="term" value="C:extracellular matrix"/>
    <property type="evidence" value="ECO:0000314"/>
    <property type="project" value="MGI"/>
</dbReference>
<dbReference type="GO" id="GO:0005615">
    <property type="term" value="C:extracellular space"/>
    <property type="evidence" value="ECO:0000314"/>
    <property type="project" value="MGI"/>
</dbReference>
<dbReference type="GO" id="GO:0005634">
    <property type="term" value="C:nucleus"/>
    <property type="evidence" value="ECO:0000314"/>
    <property type="project" value="MGI"/>
</dbReference>
<dbReference type="GO" id="GO:0005886">
    <property type="term" value="C:plasma membrane"/>
    <property type="evidence" value="ECO:0000266"/>
    <property type="project" value="MGI"/>
</dbReference>
<dbReference type="GO" id="GO:0036305">
    <property type="term" value="P:ameloblast differentiation"/>
    <property type="evidence" value="ECO:0000315"/>
    <property type="project" value="MGI"/>
</dbReference>
<dbReference type="GO" id="GO:0097186">
    <property type="term" value="P:amelogenesis"/>
    <property type="evidence" value="ECO:0000315"/>
    <property type="project" value="MGI"/>
</dbReference>
<dbReference type="GO" id="GO:0031214">
    <property type="term" value="P:biomineral tissue development"/>
    <property type="evidence" value="ECO:0007669"/>
    <property type="project" value="UniProtKB-KW"/>
</dbReference>
<dbReference type="GO" id="GO:0001658">
    <property type="term" value="P:branching involved in ureteric bud morphogenesis"/>
    <property type="evidence" value="ECO:0000315"/>
    <property type="project" value="MGI"/>
</dbReference>
<dbReference type="GO" id="GO:0071460">
    <property type="term" value="P:cellular response to cell-matrix adhesion"/>
    <property type="evidence" value="ECO:0000314"/>
    <property type="project" value="MGI"/>
</dbReference>
<dbReference type="GO" id="GO:0061448">
    <property type="term" value="P:connective tissue development"/>
    <property type="evidence" value="ECO:0000315"/>
    <property type="project" value="MGI"/>
</dbReference>
<dbReference type="GO" id="GO:0097187">
    <property type="term" value="P:dentinogenesis"/>
    <property type="evidence" value="ECO:0000315"/>
    <property type="project" value="MGI"/>
</dbReference>
<dbReference type="GO" id="GO:0060350">
    <property type="term" value="P:endochondral bone morphogenesis"/>
    <property type="evidence" value="ECO:0000315"/>
    <property type="project" value="MGI"/>
</dbReference>
<dbReference type="GO" id="GO:1901148">
    <property type="term" value="P:gene expression involved in extracellular matrix organization"/>
    <property type="evidence" value="ECO:0000315"/>
    <property type="project" value="MGI"/>
</dbReference>
<dbReference type="GO" id="GO:0060425">
    <property type="term" value="P:lung morphogenesis"/>
    <property type="evidence" value="ECO:0000315"/>
    <property type="project" value="MGI"/>
</dbReference>
<dbReference type="GO" id="GO:0061978">
    <property type="term" value="P:mandibular condyle articular cartilage development"/>
    <property type="evidence" value="ECO:0000315"/>
    <property type="project" value="MGI"/>
</dbReference>
<dbReference type="GO" id="GO:0060231">
    <property type="term" value="P:mesenchymal to epithelial transition"/>
    <property type="evidence" value="ECO:0000315"/>
    <property type="project" value="MGI"/>
</dbReference>
<dbReference type="GO" id="GO:1903011">
    <property type="term" value="P:negative regulation of bone development"/>
    <property type="evidence" value="ECO:0000315"/>
    <property type="project" value="MGI"/>
</dbReference>
<dbReference type="GO" id="GO:1902731">
    <property type="term" value="P:negative regulation of chondrocyte proliferation"/>
    <property type="evidence" value="ECO:0000315"/>
    <property type="project" value="MGI"/>
</dbReference>
<dbReference type="GO" id="GO:0061914">
    <property type="term" value="P:negative regulation of growth plate cartilage chondrocyte proliferation"/>
    <property type="evidence" value="ECO:0000315"/>
    <property type="project" value="MGI"/>
</dbReference>
<dbReference type="GO" id="GO:2001054">
    <property type="term" value="P:negative regulation of mesenchymal cell apoptotic process"/>
    <property type="evidence" value="ECO:0000315"/>
    <property type="project" value="MGI"/>
</dbReference>
<dbReference type="GO" id="GO:0071895">
    <property type="term" value="P:odontoblast differentiation"/>
    <property type="evidence" value="ECO:0000315"/>
    <property type="project" value="MGI"/>
</dbReference>
<dbReference type="GO" id="GO:0042476">
    <property type="term" value="P:odontogenesis"/>
    <property type="evidence" value="ECO:0000315"/>
    <property type="project" value="MGI"/>
</dbReference>
<dbReference type="GO" id="GO:0090280">
    <property type="term" value="P:positive regulation of calcium ion import"/>
    <property type="evidence" value="ECO:0000266"/>
    <property type="project" value="MGI"/>
</dbReference>
<dbReference type="GO" id="GO:1902732">
    <property type="term" value="P:positive regulation of chondrocyte proliferation"/>
    <property type="evidence" value="ECO:0000315"/>
    <property type="project" value="MGI"/>
</dbReference>
<dbReference type="GO" id="GO:0070175">
    <property type="term" value="P:positive regulation of enamel mineralization"/>
    <property type="evidence" value="ECO:0000314"/>
    <property type="project" value="MGI"/>
</dbReference>
<dbReference type="GO" id="GO:0072050">
    <property type="term" value="P:S-shaped body morphogenesis"/>
    <property type="evidence" value="ECO:0000315"/>
    <property type="project" value="MGI"/>
</dbReference>
<dbReference type="PANTHER" id="PTHR47819">
    <property type="entry name" value="DENTIN SIALOPHOSPHOPROTEIN"/>
    <property type="match status" value="1"/>
</dbReference>
<dbReference type="PANTHER" id="PTHR47819:SF1">
    <property type="entry name" value="DENTIN SIALOPHOSPHOPROTEIN"/>
    <property type="match status" value="1"/>
</dbReference>
<reference key="1">
    <citation type="journal article" date="1997" name="J. Biol. Chem.">
        <title>Dentin phosphoprotein and dentin sialoprotein are cleavage products expressed from a single transcript coded by a gene on human chromosome 4. Dentin phosphoprotein DNA sequence determination.</title>
        <authorList>
            <person name="MacDougall M."/>
            <person name="Simmons D."/>
            <person name="Luan X."/>
            <person name="Nydegger J."/>
            <person name="Feng J.Q."/>
            <person name="Gu T.T."/>
        </authorList>
    </citation>
    <scope>NUCLEOTIDE SEQUENCE [MRNA]</scope>
    <source>
        <strain>Swiss Webster</strain>
        <tissue>Molar</tissue>
    </source>
</reference>
<reference key="2">
    <citation type="journal article" date="1998" name="J. Biol. Chem.">
        <title>Genomic organization, chromosomal mapping, and promoter analysis of the mouse dentin sialophosphoprotein (Dspp) gene, which codes for both dentin sialoprotein and dentin phosphoprotein.</title>
        <authorList>
            <person name="Feng J.Q."/>
            <person name="Luan X."/>
            <person name="Wallace J."/>
            <person name="Jing D."/>
            <person name="Ohshima T."/>
            <person name="Kulkarni A.B."/>
            <person name="D'Souza R.N."/>
            <person name="Kozak C.A."/>
            <person name="MacDougall M."/>
        </authorList>
    </citation>
    <scope>NUCLEOTIDE SEQUENCE [GENOMIC DNA]</scope>
    <scope>SEQUENCE REVISION TO C-TERMINUS</scope>
    <source>
        <strain>129/SvJ</strain>
        <tissue>Liver</tissue>
    </source>
</reference>
<reference key="3">
    <citation type="submission" date="1999-03" db="EMBL/GenBank/DDBJ databases">
        <title>From mouse to zebrafish -- dentin matrix proteins genomic characterization.</title>
        <authorList>
            <person name="Sfeir C."/>
            <person name="Butler S."/>
            <person name="Lin E."/>
            <person name="George A."/>
            <person name="Veis A."/>
        </authorList>
    </citation>
    <scope>NUCLEOTIDE SEQUENCE [GENOMIC DNA]</scope>
    <source>
        <strain>129/SvJ</strain>
        <tissue>Liver</tissue>
    </source>
</reference>
<reference key="4">
    <citation type="submission" date="2009-01" db="UniProtKB">
        <authorList>
            <person name="Lubec G."/>
            <person name="Sunyer B."/>
            <person name="Chen W.-Q."/>
        </authorList>
    </citation>
    <scope>PROTEIN SEQUENCE OF 406-418</scope>
    <scope>IDENTIFICATION BY MASS SPECTROMETRY</scope>
    <source>
        <strain>OF1</strain>
        <tissue>Hippocampus</tissue>
    </source>
</reference>
<reference key="5">
    <citation type="journal article" date="1997" name="Eur. J. Oral Sci.">
        <title>Dentin sialoprotein (DSP) transcripts: developmentally-sustained expression in odontoblasts and transient expression in pre-ameloblasts.</title>
        <authorList>
            <person name="Ritchie H.H."/>
            <person name="Berry J.E."/>
            <person name="Somerman M.J."/>
            <person name="Hanks C.T."/>
            <person name="Bronckers A.L."/>
            <person name="Hotton D."/>
            <person name="Papagerakis P."/>
            <person name="Berdal A."/>
            <person name="Butler W.T."/>
        </authorList>
    </citation>
    <scope>TISSUE SPECIFICITY</scope>
</reference>
<reference key="6">
    <citation type="journal article" date="2001" name="Nat. Genet.">
        <title>Dentinogenesis imperfecta 1 with or without progressive hearing loss is associated with distinct mutations in DSPP.</title>
        <authorList>
            <person name="Xiao S."/>
            <person name="Yu C."/>
            <person name="Chou X."/>
            <person name="Yuan W."/>
            <person name="Wang Y."/>
            <person name="Bu L."/>
            <person name="Fu G."/>
            <person name="Qian M."/>
            <person name="Yang J."/>
            <person name="Shi Y."/>
            <person name="Hu L."/>
            <person name="Han B."/>
            <person name="Wang Z."/>
            <person name="Huang W."/>
            <person name="Liu J."/>
            <person name="Chen Z."/>
            <person name="Zhao G."/>
            <person name="Kong X."/>
        </authorList>
    </citation>
    <scope>TISSUE SPECIFICITY</scope>
</reference>
<reference key="7">
    <citation type="journal article" date="2007" name="J. Biol. Chem.">
        <title>TM14 is a new member of the fibulin family (fibulin-7) that interacts with extracellular matrix molecules and is active for cell binding.</title>
        <authorList>
            <person name="de Vega S."/>
            <person name="Iwamoto T."/>
            <person name="Nakamura T."/>
            <person name="Hozumi K."/>
            <person name="McKnight D.A."/>
            <person name="Fisher L.W."/>
            <person name="Fukumoto S."/>
            <person name="Yamada Y."/>
        </authorList>
    </citation>
    <scope>INTERACTION WITH FBLN7</scope>
</reference>
<reference key="8">
    <citation type="journal article" date="2013" name="Eur. J. Oral Sci.">
        <title>Msx1 regulates proliferation and differentiation of mouse dental mesenchymal cells in culture.</title>
        <authorList>
            <person name="Feng X.Y."/>
            <person name="Zhao Y.M."/>
            <person name="Wang W.J."/>
            <person name="Ge L.H."/>
        </authorList>
    </citation>
    <scope>DEVELOPMENTAL STAGE</scope>
</reference>
<protein>
    <recommendedName>
        <fullName evidence="9">Dentin sialophosphoprotein</fullName>
    </recommendedName>
    <alternativeName>
        <fullName>Dentin matrix protein 3</fullName>
        <shortName evidence="9">DMP-3</shortName>
    </alternativeName>
    <component>
        <recommendedName>
            <fullName>Dentin phosphoprotein</fullName>
        </recommendedName>
        <alternativeName>
            <fullName>Dentin phosphophoryn</fullName>
            <shortName evidence="9">DPP</shortName>
        </alternativeName>
    </component>
    <component>
        <recommendedName>
            <fullName>Dentin sialoprotein</fullName>
            <shortName evidence="9">DSP</shortName>
        </recommendedName>
    </component>
</protein>
<evidence type="ECO:0000250" key="1"/>
<evidence type="ECO:0000250" key="2">
    <source>
        <dbReference type="UniProtKB" id="Q62598"/>
    </source>
</evidence>
<evidence type="ECO:0000255" key="3"/>
<evidence type="ECO:0000256" key="4">
    <source>
        <dbReference type="SAM" id="MobiDB-lite"/>
    </source>
</evidence>
<evidence type="ECO:0000269" key="5">
    <source>
    </source>
</evidence>
<evidence type="ECO:0000269" key="6">
    <source>
    </source>
</evidence>
<evidence type="ECO:0000269" key="7">
    <source>
    </source>
</evidence>
<evidence type="ECO:0000269" key="8">
    <source>
    </source>
</evidence>
<evidence type="ECO:0000312" key="9">
    <source>
        <dbReference type="MGI" id="MGI:109172"/>
    </source>
</evidence>
<sequence length="934" mass="93903">MKMKIIIYICIWATAWAIPVPQLVPLERDIVENSVAVPLLTHPGTAAQNELSINSTTSNSNDSPDGSEIGEQVLSEDGYKRDGNGSESIHVGGKDFPTQPILVNEQGNTAEEHNDIETYGHDGVHARGENSTANGIRSQVGIVENAEEAESSVHGQAGQNTKSGGASDVSQNGDATLVQENEPPEASIKNSTNHEAGIHGSGVATHETTPQREGLGSENQGTEVTPSIGEDAGLDDTDGSPSGNGVEEDEDTGSGDGEGAEAGDGRESHDGTKGQGGQSHGGNTDHRGQSSVSTEDDDSKEQEGFPNGHNGDNSSEENGVEEGDSTQATQDKEKLSPKDTRDAEGGIISQSEACPSGKSQDQGIETEGPNKGNKSIITKESGKLSGSKDSNGHQGVELDKRNSPKQGESDKPQGTAEKSAAHSNLGHSRIGSSSNSDGHDSYEFDDESMQGDDPKSSDESNGSDESDTNSESANESGSRGDASYTSDESSDDDNDSDSHAGEDDSSDDSSGDGDSDSNGDGDSESEDKDESDSSDHDNSSDSESKSDSSDSSDDSSDSSDSSDSSDSSDSSDSSDSSDSSDSSDSNSSSDSSDSSGSSDSSDSSDTCDSSDSSDSSDSSDSSDSSDSSDSSDSSDSSDSSDSSSSSDSSDSSSCSDSSDSSDSSDSSDSSDSSDSSSSDSSSSSNSSDSSDSSDSSSSSDSSDSSDSSDSSDSSGSSDSSDSSASSDSSSSSDSSDSSSSSDSSDSSDSSDSSDSSESSDSSNSSDSSDSSDSSDSSDSSDSSDSSDSSDSSNSSDSSDSSDSSDSSDSSNSSDSSDSSDSSDSSDSSDSSDSSDSSDSSDSSDSSDSSDSSDSSDSSDSSDSSDSSDSSDSSDSSDSSNSSDSSDSDSKDSSSDSSDGDSKSGNGNSDSNSDSNSDSDSDSEGSDSNHSTSDD</sequence>
<comment type="function">
    <text>DSP may be an important factor in dentinogenesis. DPP may bind high amount of calcium and facilitate initial mineralization of dentin matrix collagen as well as regulate the size and shape of the crystals.</text>
</comment>
<comment type="subunit">
    <text evidence="6">Interacts with FBLN7.</text>
</comment>
<comment type="subcellular location">
    <subcellularLocation>
        <location evidence="1">Secreted</location>
        <location evidence="1">Extracellular space</location>
        <location evidence="1">Extracellular matrix</location>
    </subcellularLocation>
</comment>
<comment type="tissue specificity">
    <text evidence="5 8">Expressed in teeth, mainly in odontoblasts and transiently in pre-ameloblasts. Found in the inner ear.</text>
</comment>
<comment type="developmental stage">
    <text evidence="7">Expressed in early bell stage dental mesenchymal cells at 15.5 dpc (at protein level) (PubMed:24028588). Expressed in bell stage dental mesenchymal cells at 17.5 dpc (PubMed:24028588).</text>
</comment>
<comment type="PTM">
    <text>DSP is glycosylated.</text>
</comment>
<keyword id="KW-0091">Biomineralization</keyword>
<keyword id="KW-0106">Calcium</keyword>
<keyword id="KW-0903">Direct protein sequencing</keyword>
<keyword id="KW-0272">Extracellular matrix</keyword>
<keyword id="KW-0325">Glycoprotein</keyword>
<keyword id="KW-0597">Phosphoprotein</keyword>
<keyword id="KW-1185">Reference proteome</keyword>
<keyword id="KW-0964">Secreted</keyword>
<keyword id="KW-0730">Sialic acid</keyword>
<keyword id="KW-0732">Signal</keyword>